<keyword id="KW-0963">Cytoplasm</keyword>
<keyword id="KW-0255">Endonuclease</keyword>
<keyword id="KW-0378">Hydrolase</keyword>
<keyword id="KW-0540">Nuclease</keyword>
<keyword id="KW-0819">tRNA processing</keyword>
<dbReference type="EC" id="3.1.26.5" evidence="1"/>
<dbReference type="EMBL" id="CP001400">
    <property type="protein sequence ID" value="ACP38155.1"/>
    <property type="molecule type" value="Genomic_DNA"/>
</dbReference>
<dbReference type="RefSeq" id="WP_012711400.1">
    <property type="nucleotide sequence ID" value="NC_012588.1"/>
</dbReference>
<dbReference type="SMR" id="C3MVG0"/>
<dbReference type="KEGG" id="sia:M1425_1402"/>
<dbReference type="HOGENOM" id="CLU_1801579_0_0_2"/>
<dbReference type="Proteomes" id="UP000001350">
    <property type="component" value="Chromosome"/>
</dbReference>
<dbReference type="GO" id="GO:0005737">
    <property type="term" value="C:cytoplasm"/>
    <property type="evidence" value="ECO:0007669"/>
    <property type="project" value="UniProtKB-SubCell"/>
</dbReference>
<dbReference type="GO" id="GO:0030677">
    <property type="term" value="C:ribonuclease P complex"/>
    <property type="evidence" value="ECO:0007669"/>
    <property type="project" value="UniProtKB-UniRule"/>
</dbReference>
<dbReference type="GO" id="GO:0004526">
    <property type="term" value="F:ribonuclease P activity"/>
    <property type="evidence" value="ECO:0007669"/>
    <property type="project" value="UniProtKB-UniRule"/>
</dbReference>
<dbReference type="GO" id="GO:0001682">
    <property type="term" value="P:tRNA 5'-leader removal"/>
    <property type="evidence" value="ECO:0007669"/>
    <property type="project" value="UniProtKB-UniRule"/>
</dbReference>
<dbReference type="Gene3D" id="3.30.70.3250">
    <property type="entry name" value="Ribonuclease P, Pop5 subunit"/>
    <property type="match status" value="1"/>
</dbReference>
<dbReference type="HAMAP" id="MF_00755">
    <property type="entry name" value="RNase_P_2"/>
    <property type="match status" value="1"/>
</dbReference>
<dbReference type="InterPro" id="IPR002759">
    <property type="entry name" value="Pop5/Rpp14/Rnp2-like"/>
</dbReference>
<dbReference type="InterPro" id="IPR038085">
    <property type="entry name" value="Rnp2-like_sf"/>
</dbReference>
<dbReference type="Pfam" id="PF01900">
    <property type="entry name" value="RNase_P_Rpp14"/>
    <property type="match status" value="1"/>
</dbReference>
<dbReference type="SUPFAM" id="SSF160350">
    <property type="entry name" value="Rnp2-like"/>
    <property type="match status" value="1"/>
</dbReference>
<organism>
    <name type="scientific">Saccharolobus islandicus (strain M.14.25 / Kamchatka #1)</name>
    <name type="common">Sulfolobus islandicus</name>
    <dbReference type="NCBI Taxonomy" id="427317"/>
    <lineage>
        <taxon>Archaea</taxon>
        <taxon>Thermoproteota</taxon>
        <taxon>Thermoprotei</taxon>
        <taxon>Sulfolobales</taxon>
        <taxon>Sulfolobaceae</taxon>
        <taxon>Saccharolobus</taxon>
    </lineage>
</organism>
<proteinExistence type="inferred from homology"/>
<name>RNP2_SACI4</name>
<gene>
    <name evidence="1" type="primary">rnp2</name>
    <name type="ordered locus">M1425_1402</name>
</gene>
<comment type="function">
    <text evidence="1">Part of ribonuclease P, a protein complex that generates mature tRNA molecules by cleaving their 5'-ends.</text>
</comment>
<comment type="catalytic activity">
    <reaction evidence="1">
        <text>Endonucleolytic cleavage of RNA, removing 5'-extranucleotides from tRNA precursor.</text>
        <dbReference type="EC" id="3.1.26.5"/>
    </reaction>
</comment>
<comment type="subunit">
    <text evidence="1">Consists of a catalytic RNA component and at least 4-5 protein subunits.</text>
</comment>
<comment type="subcellular location">
    <subcellularLocation>
        <location evidence="1">Cytoplasm</location>
    </subcellularLocation>
</comment>
<comment type="similarity">
    <text evidence="1">Belongs to the eukaryotic/archaeal RNase P protein component 2 family.</text>
</comment>
<feature type="chain" id="PRO_1000212856" description="Ribonuclease P protein component 2">
    <location>
        <begin position="1"/>
        <end position="143"/>
    </location>
</feature>
<accession>C3MVG0</accession>
<reference key="1">
    <citation type="journal article" date="2009" name="Proc. Natl. Acad. Sci. U.S.A.">
        <title>Biogeography of the Sulfolobus islandicus pan-genome.</title>
        <authorList>
            <person name="Reno M.L."/>
            <person name="Held N.L."/>
            <person name="Fields C.J."/>
            <person name="Burke P.V."/>
            <person name="Whitaker R.J."/>
        </authorList>
    </citation>
    <scope>NUCLEOTIDE SEQUENCE [LARGE SCALE GENOMIC DNA]</scope>
    <source>
        <strain>M.14.25 / Kamchatka #1</strain>
    </source>
</reference>
<sequence>MNSIQLIIDIILILWLLILTVLYLRKKSLNLNIVKNKKIVRAKRYIVFYVIAESKVKGDDLERVVRNSLKDLLGNVWLNIANPKVVTYREDTQEGIISTNRIGYKAVLASLPFAKEINGNKILIVPRRTTGSLKKAKKLIGLK</sequence>
<evidence type="ECO:0000255" key="1">
    <source>
        <dbReference type="HAMAP-Rule" id="MF_00755"/>
    </source>
</evidence>
<protein>
    <recommendedName>
        <fullName evidence="1">Ribonuclease P protein component 2</fullName>
        <shortName evidence="1">RNase P component 2</shortName>
        <ecNumber evidence="1">3.1.26.5</ecNumber>
    </recommendedName>
    <alternativeName>
        <fullName evidence="1">Pop5</fullName>
    </alternativeName>
</protein>